<feature type="chain" id="PRO_0000186668" description="PTS system sucrose-specific EIIBC component">
    <location>
        <begin position="1"/>
        <end position="456"/>
    </location>
</feature>
<feature type="transmembrane region" description="Helical" evidence="3">
    <location>
        <begin position="112"/>
        <end position="132"/>
    </location>
</feature>
<feature type="transmembrane region" description="Helical" evidence="3">
    <location>
        <begin position="144"/>
        <end position="164"/>
    </location>
</feature>
<feature type="transmembrane region" description="Helical" evidence="3">
    <location>
        <begin position="181"/>
        <end position="201"/>
    </location>
</feature>
<feature type="transmembrane region" description="Helical" evidence="3">
    <location>
        <begin position="209"/>
        <end position="229"/>
    </location>
</feature>
<feature type="transmembrane region" description="Helical" evidence="3">
    <location>
        <begin position="247"/>
        <end position="267"/>
    </location>
</feature>
<feature type="transmembrane region" description="Helical" evidence="3">
    <location>
        <begin position="288"/>
        <end position="308"/>
    </location>
</feature>
<feature type="transmembrane region" description="Helical" evidence="3">
    <location>
        <begin position="329"/>
        <end position="349"/>
    </location>
</feature>
<feature type="transmembrane region" description="Helical" evidence="3">
    <location>
        <begin position="360"/>
        <end position="380"/>
    </location>
</feature>
<feature type="transmembrane region" description="Helical" evidence="3">
    <location>
        <begin position="388"/>
        <end position="408"/>
    </location>
</feature>
<feature type="transmembrane region" description="Helical" evidence="3">
    <location>
        <begin position="428"/>
        <end position="448"/>
    </location>
</feature>
<feature type="domain" description="PTS EIIB type-1" evidence="2">
    <location>
        <begin position="4"/>
        <end position="87"/>
    </location>
</feature>
<feature type="domain" description="PTS EIIC type-1" evidence="3">
    <location>
        <begin position="107"/>
        <end position="456"/>
    </location>
</feature>
<feature type="active site" description="Phosphocysteine intermediate; for EIIB activity" evidence="2">
    <location>
        <position position="26"/>
    </location>
</feature>
<accession>P27219</accession>
<gene>
    <name evidence="5" type="primary">scrA</name>
</gene>
<evidence type="ECO:0000255" key="1"/>
<evidence type="ECO:0000255" key="2">
    <source>
        <dbReference type="PROSITE-ProRule" id="PRU00421"/>
    </source>
</evidence>
<evidence type="ECO:0000255" key="3">
    <source>
        <dbReference type="PROSITE-ProRule" id="PRU00426"/>
    </source>
</evidence>
<evidence type="ECO:0000269" key="4">
    <source>
    </source>
</evidence>
<evidence type="ECO:0000303" key="5">
    <source>
    </source>
</evidence>
<evidence type="ECO:0000305" key="6"/>
<evidence type="ECO:0000305" key="7">
    <source>
    </source>
</evidence>
<reference key="1">
    <citation type="journal article" date="1996" name="Mol. Gen. Genet.">
        <title>Molecular analysis of the scrA and scrB genes from Klebsiella pneumoniae and plasmid pUR400, which encode the sucrose transport protein Enzyme II Scr of the phosphotransferase system and a sucrose-6-phosphate invertase.</title>
        <authorList>
            <person name="Titgemeyer F."/>
            <person name="Jahreis K."/>
            <person name="Ebner R."/>
            <person name="Lengeler J.W."/>
        </authorList>
    </citation>
    <scope>NUCLEOTIDE SEQUENCE [GENOMIC DNA]</scope>
    <scope>FUNCTION</scope>
    <source>
        <strain>1033-5P14 / KAY2026</strain>
    </source>
</reference>
<proteinExistence type="inferred from homology"/>
<organism>
    <name type="scientific">Klebsiella pneumoniae</name>
    <dbReference type="NCBI Taxonomy" id="573"/>
    <lineage>
        <taxon>Bacteria</taxon>
        <taxon>Pseudomonadati</taxon>
        <taxon>Pseudomonadota</taxon>
        <taxon>Gammaproteobacteria</taxon>
        <taxon>Enterobacterales</taxon>
        <taxon>Enterobacteriaceae</taxon>
        <taxon>Klebsiella/Raoultella group</taxon>
        <taxon>Klebsiella</taxon>
        <taxon>Klebsiella pneumoniae complex</taxon>
    </lineage>
</organism>
<name>PTSBC_KLEPN</name>
<protein>
    <recommendedName>
        <fullName evidence="6">PTS system sucrose-specific EIIBC component</fullName>
    </recommendedName>
    <alternativeName>
        <fullName>EIIBC-Scr</fullName>
        <shortName>EII-Scr</shortName>
    </alternativeName>
    <domain>
        <recommendedName>
            <fullName>Sucrose-specific phosphotransferase enzyme IIB component</fullName>
            <ecNumber evidence="7">2.7.1.211</ecNumber>
        </recommendedName>
        <alternativeName>
            <fullName>PTS system sucrose-specific EIIB component</fullName>
        </alternativeName>
    </domain>
    <domain>
        <recommendedName>
            <fullName>Sucrose permease IIC component</fullName>
        </recommendedName>
        <alternativeName>
            <fullName>PTS system sucrose-specific EIIC component</fullName>
        </alternativeName>
    </domain>
</protein>
<comment type="function">
    <text evidence="4 7">The phosphoenolpyruvate-dependent sugar phosphotransferase system (sugar PTS), a major carbohydrate active transport system, catalyzes the phosphorylation of incoming sugar substrates concomitantly with their translocation across the cell membrane (Probable). This system is involved in sucrose transport (PubMed:8628219).</text>
</comment>
<comment type="catalytic activity">
    <reaction evidence="7">
        <text>N(pros)-phospho-L-histidyl-[protein](out) + sucrose = sucrose 6(G)-phosphate(in) + L-histidyl-[protein]</text>
        <dbReference type="Rhea" id="RHEA:49236"/>
        <dbReference type="Rhea" id="RHEA-COMP:9745"/>
        <dbReference type="Rhea" id="RHEA-COMP:9746"/>
        <dbReference type="ChEBI" id="CHEBI:17992"/>
        <dbReference type="ChEBI" id="CHEBI:29979"/>
        <dbReference type="ChEBI" id="CHEBI:64837"/>
        <dbReference type="ChEBI" id="CHEBI:91002"/>
        <dbReference type="EC" id="2.7.1.211"/>
    </reaction>
</comment>
<comment type="subcellular location">
    <subcellularLocation>
        <location evidence="7">Cell inner membrane</location>
        <topology evidence="1">Multi-pass membrane protein</topology>
    </subcellularLocation>
</comment>
<comment type="domain">
    <text evidence="2">The PTS EIIB type-1 domain is phosphorylated by phospho-EIIA on a cysteinyl residue. Then, it transfers the phosphoryl group to the sugar substrate concomitantly with the sugar uptake processed by the PTS EIIC type-1 domain.</text>
</comment>
<comment type="domain">
    <text evidence="3">The EIIC domain type-1 forms the PTS system translocation channel and contains the specific substrate-binding site.</text>
</comment>
<keyword id="KW-0997">Cell inner membrane</keyword>
<keyword id="KW-1003">Cell membrane</keyword>
<keyword id="KW-0418">Kinase</keyword>
<keyword id="KW-0472">Membrane</keyword>
<keyword id="KW-0598">Phosphotransferase system</keyword>
<keyword id="KW-0762">Sugar transport</keyword>
<keyword id="KW-0808">Transferase</keyword>
<keyword id="KW-0812">Transmembrane</keyword>
<keyword id="KW-1133">Transmembrane helix</keyword>
<keyword id="KW-0813">Transport</keyword>
<dbReference type="EC" id="2.7.1.211" evidence="7"/>
<dbReference type="EMBL" id="X57401">
    <property type="protein sequence ID" value="CAA40658.1"/>
    <property type="molecule type" value="Genomic_DNA"/>
</dbReference>
<dbReference type="PIR" id="S62331">
    <property type="entry name" value="S62331"/>
</dbReference>
<dbReference type="RefSeq" id="WP_002892640.1">
    <property type="nucleotide sequence ID" value="NZ_WYAM01000013.1"/>
</dbReference>
<dbReference type="SMR" id="P27219"/>
<dbReference type="OMA" id="LITHAGW"/>
<dbReference type="BioCyc" id="MetaCyc:MONOMER-12625"/>
<dbReference type="BRENDA" id="2.7.1.211">
    <property type="organism ID" value="2814"/>
</dbReference>
<dbReference type="GO" id="GO:0005886">
    <property type="term" value="C:plasma membrane"/>
    <property type="evidence" value="ECO:0007669"/>
    <property type="project" value="UniProtKB-SubCell"/>
</dbReference>
<dbReference type="GO" id="GO:0016301">
    <property type="term" value="F:kinase activity"/>
    <property type="evidence" value="ECO:0007669"/>
    <property type="project" value="UniProtKB-KW"/>
</dbReference>
<dbReference type="GO" id="GO:0022878">
    <property type="term" value="F:protein-N(PI)-phosphohistidine-sucrose phosphotransferase system transporter activity"/>
    <property type="evidence" value="ECO:0007669"/>
    <property type="project" value="RHEA"/>
</dbReference>
<dbReference type="GO" id="GO:0090589">
    <property type="term" value="F:protein-phosphocysteine-trehalose phosphotransferase system transporter activity"/>
    <property type="evidence" value="ECO:0007669"/>
    <property type="project" value="TreeGrafter"/>
</dbReference>
<dbReference type="GO" id="GO:0009401">
    <property type="term" value="P:phosphoenolpyruvate-dependent sugar phosphotransferase system"/>
    <property type="evidence" value="ECO:0007669"/>
    <property type="project" value="UniProtKB-KW"/>
</dbReference>
<dbReference type="GO" id="GO:0015771">
    <property type="term" value="P:trehalose transport"/>
    <property type="evidence" value="ECO:0007669"/>
    <property type="project" value="TreeGrafter"/>
</dbReference>
<dbReference type="CDD" id="cd00212">
    <property type="entry name" value="PTS_IIB_glc"/>
    <property type="match status" value="1"/>
</dbReference>
<dbReference type="FunFam" id="3.30.1360.60:FF:000001">
    <property type="entry name" value="PTS system glucose-specific IIBC component PtsG"/>
    <property type="match status" value="1"/>
</dbReference>
<dbReference type="Gene3D" id="3.30.1360.60">
    <property type="entry name" value="Glucose permease domain IIB"/>
    <property type="match status" value="1"/>
</dbReference>
<dbReference type="InterPro" id="IPR036878">
    <property type="entry name" value="Glu_permease_IIB"/>
</dbReference>
<dbReference type="InterPro" id="IPR018113">
    <property type="entry name" value="PTrfase_EIIB_Cys"/>
</dbReference>
<dbReference type="InterPro" id="IPR003352">
    <property type="entry name" value="PTS_EIIC"/>
</dbReference>
<dbReference type="InterPro" id="IPR013013">
    <property type="entry name" value="PTS_EIIC_1"/>
</dbReference>
<dbReference type="InterPro" id="IPR001996">
    <property type="entry name" value="PTS_IIB_1"/>
</dbReference>
<dbReference type="InterPro" id="IPR010973">
    <property type="entry name" value="PTS_IIBC_sucr"/>
</dbReference>
<dbReference type="InterPro" id="IPR004719">
    <property type="entry name" value="PTS_maltose/Glc_sub_IIC"/>
</dbReference>
<dbReference type="InterPro" id="IPR050558">
    <property type="entry name" value="PTS_Sugar-Specific_Components"/>
</dbReference>
<dbReference type="NCBIfam" id="TIGR00826">
    <property type="entry name" value="EIIB_glc"/>
    <property type="match status" value="1"/>
</dbReference>
<dbReference type="NCBIfam" id="TIGR00852">
    <property type="entry name" value="pts-Glc"/>
    <property type="match status" value="1"/>
</dbReference>
<dbReference type="NCBIfam" id="TIGR01996">
    <property type="entry name" value="PTS-II-BC-sucr"/>
    <property type="match status" value="1"/>
</dbReference>
<dbReference type="PANTHER" id="PTHR30175:SF7">
    <property type="entry name" value="NEGATIVE REGULATOR OF SACY ACTIVITY"/>
    <property type="match status" value="1"/>
</dbReference>
<dbReference type="PANTHER" id="PTHR30175">
    <property type="entry name" value="PHOSPHOTRANSFERASE SYSTEM TRANSPORT PROTEIN"/>
    <property type="match status" value="1"/>
</dbReference>
<dbReference type="Pfam" id="PF00367">
    <property type="entry name" value="PTS_EIIB"/>
    <property type="match status" value="1"/>
</dbReference>
<dbReference type="Pfam" id="PF02378">
    <property type="entry name" value="PTS_EIIC"/>
    <property type="match status" value="1"/>
</dbReference>
<dbReference type="SUPFAM" id="SSF55604">
    <property type="entry name" value="Glucose permease domain IIB"/>
    <property type="match status" value="1"/>
</dbReference>
<dbReference type="PROSITE" id="PS51098">
    <property type="entry name" value="PTS_EIIB_TYPE_1"/>
    <property type="match status" value="1"/>
</dbReference>
<dbReference type="PROSITE" id="PS01035">
    <property type="entry name" value="PTS_EIIB_TYPE_1_CYS"/>
    <property type="match status" value="1"/>
</dbReference>
<dbReference type="PROSITE" id="PS51103">
    <property type="entry name" value="PTS_EIIC_TYPE_1"/>
    <property type="match status" value="1"/>
</dbReference>
<sequence length="456" mass="48022">MDFEQISRSLLPLLGGKENIASAAHCATRLRLVLVDDALADQQAIGKIDGVKGCFRNAGQMQIIFGTGVVNKVYAAFIQAAGISESSKSEAADLAAKKLNPFQRIARLLSNIFVPIIPAIVASGLLMGLLGMVKTYGWVDPSNALYIMLDMCSSAAFIILPILIGFTAAREFGGNPYLGATLGGILTHPALTNAWGVAAGFHTMNFFGIEVAMIGYQGTVFPVLLAVWFMSMVEKRLRRVIPDALDLILTPFLTVIISGFIALLLIGPAGRALGDGISFILSTLISHAGWLAGLLFGGLYSVIVITGIHHSFHAIEAGLLGNPSIGVNFLLPIWAMANVAQGGACFAVWFKTKDAKIKAITLPSAFSAMLGITEAAIFGINLRFVKPFIAALVGGAAGGAWVVSMHVYMTAVGLTAIPGMAIVQASSLLNYIIGMAIAFAVAFALSLTLKYKTDAE</sequence>